<organism>
    <name type="scientific">Staphylococcus carnosus (strain TM300)</name>
    <dbReference type="NCBI Taxonomy" id="396513"/>
    <lineage>
        <taxon>Bacteria</taxon>
        <taxon>Bacillati</taxon>
        <taxon>Bacillota</taxon>
        <taxon>Bacilli</taxon>
        <taxon>Bacillales</taxon>
        <taxon>Staphylococcaceae</taxon>
        <taxon>Staphylococcus</taxon>
    </lineage>
</organism>
<gene>
    <name evidence="1" type="primary">galK</name>
    <name type="ordered locus">Sca_1771</name>
</gene>
<reference key="1">
    <citation type="submission" date="1998-11" db="EMBL/GenBank/DDBJ databases">
        <title>Organization and nucleotide sequence of the Staphylococcus carnosus galactose operon.</title>
        <authorList>
            <person name="Krismer B."/>
            <person name="Goetz F."/>
        </authorList>
    </citation>
    <scope>NUCLEOTIDE SEQUENCE [GENOMIC DNA]</scope>
</reference>
<reference key="2">
    <citation type="journal article" date="2009" name="Appl. Environ. Microbiol.">
        <title>Genome analysis of the meat starter culture bacterium Staphylococcus carnosus TM300.</title>
        <authorList>
            <person name="Rosenstein R."/>
            <person name="Nerz C."/>
            <person name="Biswas L."/>
            <person name="Resch A."/>
            <person name="Raddatz G."/>
            <person name="Schuster S.C."/>
            <person name="Goetz F."/>
        </authorList>
    </citation>
    <scope>NUCLEOTIDE SEQUENCE [LARGE SCALE GENOMIC DNA]</scope>
    <source>
        <strain>TM300</strain>
    </source>
</reference>
<evidence type="ECO:0000255" key="1">
    <source>
        <dbReference type="HAMAP-Rule" id="MF_00246"/>
    </source>
</evidence>
<proteinExistence type="inferred from homology"/>
<protein>
    <recommendedName>
        <fullName evidence="1">Galactokinase</fullName>
        <ecNumber evidence="1">2.7.1.6</ecNumber>
    </recommendedName>
    <alternativeName>
        <fullName evidence="1">Galactose kinase</fullName>
    </alternativeName>
</protein>
<dbReference type="EC" id="2.7.1.6" evidence="1"/>
<dbReference type="EMBL" id="AF109295">
    <property type="protein sequence ID" value="AAF25548.1"/>
    <property type="molecule type" value="Genomic_DNA"/>
</dbReference>
<dbReference type="EMBL" id="AM295250">
    <property type="protein sequence ID" value="CAL28676.1"/>
    <property type="molecule type" value="Genomic_DNA"/>
</dbReference>
<dbReference type="RefSeq" id="WP_015901012.1">
    <property type="nucleotide sequence ID" value="NC_012121.1"/>
</dbReference>
<dbReference type="SMR" id="Q9RGS1"/>
<dbReference type="KEGG" id="sca:SCA_1771"/>
<dbReference type="eggNOG" id="COG0153">
    <property type="taxonomic scope" value="Bacteria"/>
</dbReference>
<dbReference type="HOGENOM" id="CLU_017814_2_1_9"/>
<dbReference type="OrthoDB" id="250531at2"/>
<dbReference type="BioCyc" id="SCAR396513:SCA_RS09010-MONOMER"/>
<dbReference type="UniPathway" id="UPA00214"/>
<dbReference type="Proteomes" id="UP000000444">
    <property type="component" value="Chromosome"/>
</dbReference>
<dbReference type="GO" id="GO:0005829">
    <property type="term" value="C:cytosol"/>
    <property type="evidence" value="ECO:0007669"/>
    <property type="project" value="TreeGrafter"/>
</dbReference>
<dbReference type="GO" id="GO:0005524">
    <property type="term" value="F:ATP binding"/>
    <property type="evidence" value="ECO:0007669"/>
    <property type="project" value="UniProtKB-UniRule"/>
</dbReference>
<dbReference type="GO" id="GO:0004335">
    <property type="term" value="F:galactokinase activity"/>
    <property type="evidence" value="ECO:0007669"/>
    <property type="project" value="UniProtKB-UniRule"/>
</dbReference>
<dbReference type="GO" id="GO:0000287">
    <property type="term" value="F:magnesium ion binding"/>
    <property type="evidence" value="ECO:0007669"/>
    <property type="project" value="UniProtKB-UniRule"/>
</dbReference>
<dbReference type="GO" id="GO:0006012">
    <property type="term" value="P:galactose metabolic process"/>
    <property type="evidence" value="ECO:0007669"/>
    <property type="project" value="UniProtKB-UniRule"/>
</dbReference>
<dbReference type="FunFam" id="3.30.230.10:FF:000017">
    <property type="entry name" value="Galactokinase"/>
    <property type="match status" value="1"/>
</dbReference>
<dbReference type="FunFam" id="3.30.70.890:FF:000001">
    <property type="entry name" value="Galactokinase"/>
    <property type="match status" value="1"/>
</dbReference>
<dbReference type="Gene3D" id="3.30.230.10">
    <property type="match status" value="1"/>
</dbReference>
<dbReference type="Gene3D" id="3.30.70.890">
    <property type="entry name" value="GHMP kinase, C-terminal domain"/>
    <property type="match status" value="1"/>
</dbReference>
<dbReference type="HAMAP" id="MF_00246">
    <property type="entry name" value="Galactokinase"/>
    <property type="match status" value="1"/>
</dbReference>
<dbReference type="InterPro" id="IPR000705">
    <property type="entry name" value="Galactokinase"/>
</dbReference>
<dbReference type="InterPro" id="IPR022963">
    <property type="entry name" value="Galactokinase_bac"/>
</dbReference>
<dbReference type="InterPro" id="IPR019741">
    <property type="entry name" value="Galactokinase_CS"/>
</dbReference>
<dbReference type="InterPro" id="IPR019539">
    <property type="entry name" value="GalKase_N"/>
</dbReference>
<dbReference type="InterPro" id="IPR013750">
    <property type="entry name" value="GHMP_kinase_C_dom"/>
</dbReference>
<dbReference type="InterPro" id="IPR036554">
    <property type="entry name" value="GHMP_kinase_C_sf"/>
</dbReference>
<dbReference type="InterPro" id="IPR006204">
    <property type="entry name" value="GHMP_kinase_N_dom"/>
</dbReference>
<dbReference type="InterPro" id="IPR006206">
    <property type="entry name" value="Mevalonate/galactokinase"/>
</dbReference>
<dbReference type="InterPro" id="IPR020568">
    <property type="entry name" value="Ribosomal_Su5_D2-typ_SF"/>
</dbReference>
<dbReference type="InterPro" id="IPR014721">
    <property type="entry name" value="Ribsml_uS5_D2-typ_fold_subgr"/>
</dbReference>
<dbReference type="NCBIfam" id="TIGR00131">
    <property type="entry name" value="gal_kin"/>
    <property type="match status" value="1"/>
</dbReference>
<dbReference type="NCBIfam" id="NF003705">
    <property type="entry name" value="PRK05322.1"/>
    <property type="match status" value="1"/>
</dbReference>
<dbReference type="PANTHER" id="PTHR10457:SF7">
    <property type="entry name" value="GALACTOKINASE-RELATED"/>
    <property type="match status" value="1"/>
</dbReference>
<dbReference type="PANTHER" id="PTHR10457">
    <property type="entry name" value="MEVALONATE KINASE/GALACTOKINASE"/>
    <property type="match status" value="1"/>
</dbReference>
<dbReference type="Pfam" id="PF10509">
    <property type="entry name" value="GalKase_gal_bdg"/>
    <property type="match status" value="1"/>
</dbReference>
<dbReference type="Pfam" id="PF08544">
    <property type="entry name" value="GHMP_kinases_C"/>
    <property type="match status" value="1"/>
</dbReference>
<dbReference type="Pfam" id="PF00288">
    <property type="entry name" value="GHMP_kinases_N"/>
    <property type="match status" value="1"/>
</dbReference>
<dbReference type="PIRSF" id="PIRSF000530">
    <property type="entry name" value="Galactokinase"/>
    <property type="match status" value="1"/>
</dbReference>
<dbReference type="PRINTS" id="PR00473">
    <property type="entry name" value="GALCTOKINASE"/>
</dbReference>
<dbReference type="PRINTS" id="PR00959">
    <property type="entry name" value="MEVGALKINASE"/>
</dbReference>
<dbReference type="SUPFAM" id="SSF55060">
    <property type="entry name" value="GHMP Kinase, C-terminal domain"/>
    <property type="match status" value="1"/>
</dbReference>
<dbReference type="SUPFAM" id="SSF54211">
    <property type="entry name" value="Ribosomal protein S5 domain 2-like"/>
    <property type="match status" value="1"/>
</dbReference>
<dbReference type="PROSITE" id="PS00106">
    <property type="entry name" value="GALACTOKINASE"/>
    <property type="match status" value="1"/>
</dbReference>
<comment type="function">
    <text evidence="1">Catalyzes the transfer of the gamma-phosphate of ATP to D-galactose to form alpha-D-galactose-1-phosphate (Gal-1-P).</text>
</comment>
<comment type="catalytic activity">
    <reaction evidence="1">
        <text>alpha-D-galactose + ATP = alpha-D-galactose 1-phosphate + ADP + H(+)</text>
        <dbReference type="Rhea" id="RHEA:13553"/>
        <dbReference type="ChEBI" id="CHEBI:15378"/>
        <dbReference type="ChEBI" id="CHEBI:28061"/>
        <dbReference type="ChEBI" id="CHEBI:30616"/>
        <dbReference type="ChEBI" id="CHEBI:58336"/>
        <dbReference type="ChEBI" id="CHEBI:456216"/>
        <dbReference type="EC" id="2.7.1.6"/>
    </reaction>
</comment>
<comment type="pathway">
    <text evidence="1">Carbohydrate metabolism; galactose metabolism.</text>
</comment>
<comment type="subcellular location">
    <subcellularLocation>
        <location evidence="1">Cytoplasm</location>
    </subcellularLocation>
</comment>
<comment type="similarity">
    <text evidence="1">Belongs to the GHMP kinase family. GalK subfamily.</text>
</comment>
<keyword id="KW-0067">ATP-binding</keyword>
<keyword id="KW-0119">Carbohydrate metabolism</keyword>
<keyword id="KW-0963">Cytoplasm</keyword>
<keyword id="KW-0299">Galactose metabolism</keyword>
<keyword id="KW-0418">Kinase</keyword>
<keyword id="KW-0460">Magnesium</keyword>
<keyword id="KW-0479">Metal-binding</keyword>
<keyword id="KW-0547">Nucleotide-binding</keyword>
<keyword id="KW-1185">Reference proteome</keyword>
<keyword id="KW-0808">Transferase</keyword>
<sequence>MLTSMKSKFDTLFNTQPEVAAFAPGRINLIGEHTDYNGGYVFPAAIELGTYGLASKRNDNKICLYSNNFESTGTIEFSLDELQFDTTHSWANYPKGMVKFLKESGYQIDSGFNILIEGNIPNGASLSSSASIEILMGWLLKALFNLEVERLELIELGRKVENQFIGVNSGIMDQFIVGMGRKDQAILLDTATLEYHYVPTEFGDYVISIMNTNKRRELAESKYNERLKECQSALALLQQELDVDALGHIDVTTFEKHAYLIEEDVLLRRARHAITENARVKEAHAALNRKDFIEFGRLLNASHASLKNDYEVTGIELDTLAETAQQVEGVLGARMTGAGFAGCAIALVHKDRIKDLEEEVTKIYKDKIGYEPSFYHVDIGDGVKYIKI</sequence>
<feature type="chain" id="PRO_0000184624" description="Galactokinase">
    <location>
        <begin position="1"/>
        <end position="388"/>
    </location>
</feature>
<feature type="active site" description="Proton acceptor" evidence="1">
    <location>
        <position position="173"/>
    </location>
</feature>
<feature type="binding site" evidence="1">
    <location>
        <begin position="32"/>
        <end position="35"/>
    </location>
    <ligand>
        <name>substrate</name>
    </ligand>
</feature>
<feature type="binding site" evidence="1">
    <location>
        <position position="66"/>
    </location>
    <ligand>
        <name>ATP</name>
        <dbReference type="ChEBI" id="CHEBI:30616"/>
    </ligand>
</feature>
<feature type="binding site" evidence="1">
    <location>
        <begin position="123"/>
        <end position="129"/>
    </location>
    <ligand>
        <name>ATP</name>
        <dbReference type="ChEBI" id="CHEBI:30616"/>
    </ligand>
</feature>
<feature type="binding site" evidence="1">
    <location>
        <position position="129"/>
    </location>
    <ligand>
        <name>Mg(2+)</name>
        <dbReference type="ChEBI" id="CHEBI:18420"/>
    </ligand>
</feature>
<feature type="binding site" evidence="1">
    <location>
        <position position="161"/>
    </location>
    <ligand>
        <name>Mg(2+)</name>
        <dbReference type="ChEBI" id="CHEBI:18420"/>
    </ligand>
</feature>
<feature type="binding site" evidence="1">
    <location>
        <position position="223"/>
    </location>
    <ligand>
        <name>substrate</name>
    </ligand>
</feature>
<feature type="site" description="Transition state stabilizer" evidence="1">
    <location>
        <position position="26"/>
    </location>
</feature>
<name>GAL1_STACT</name>
<accession>Q9RGS1</accession>
<accession>B9DLY2</accession>